<feature type="chain" id="PRO_0000379069" description="Protein hook">
    <location>
        <begin position="1"/>
        <end position="679"/>
    </location>
</feature>
<feature type="domain" description="Calponin-homology (CH)" evidence="3">
    <location>
        <begin position="6"/>
        <end position="123"/>
    </location>
</feature>
<feature type="coiled-coil region" evidence="2">
    <location>
        <begin position="135"/>
        <end position="437"/>
    </location>
</feature>
<feature type="coiled-coil region" evidence="2">
    <location>
        <begin position="480"/>
        <end position="574"/>
    </location>
</feature>
<sequence>MSAPKNEMYYSLLEWFKTLNLNAPHADAESLADGVALAQALNQFAPESFTDAWLSKIKASAVGSNWRLRMSNLKKVTQSVYDYYSDVLNYSLSDFSKPDLQRIAEKCDLGELERLLQLVLGCAVNCAEKQSYITEIMCLEEELQANIMRALQELEATRQASTPEGGVASSLSRGSRTGLLDSKAVQEDRDALAQKCFETEKKMLLLIDEKTNLQQELHKLQQEFARLEQHSTVIGDDGVSLGPVQTGSVRYNELRRQLDLLKEELLQSEGAREDLKIKAQQQDTDLLHMQMRIEELMKSSAEVTTLKDEVDVLRESNDKLKICEAQLDTYKKKLEDYNDLKKQVKILEERSADYVQQNAQFEEDAKRYANTKGQVELFKKEIQDLHAKLDAESSKNVKLEFDNKNLEGKNLALQRAKDSLLKERDNLREAVDELKCGQLSSSTALTGTTVSRELQPSATVEKLQRLEAENKALREGQGGQTALAQLLDDANKRCENLREQLKTANERILSLSHASQSDDPILKESEFGKQIKQLMELNEQKTLQLEEAVTQSTSLQCKVTQLETNLSAREQEILVYDAKYRKCVEKAKEVIKSIDPRIASALDASVLEKSADLVEEEPKPKMSVMEEQLMTSAFYRLGVNAQRDAIDSKLAILMGSGQTFLARQRQSAPRKSLSAMKSK</sequence>
<evidence type="ECO:0000250" key="1">
    <source>
        <dbReference type="UniProtKB" id="Q24185"/>
    </source>
</evidence>
<evidence type="ECO:0000255" key="2"/>
<evidence type="ECO:0000255" key="3">
    <source>
        <dbReference type="PROSITE-ProRule" id="PRU00044"/>
    </source>
</evidence>
<evidence type="ECO:0000305" key="4"/>
<proteinExistence type="inferred from homology"/>
<protein>
    <recommendedName>
        <fullName>Protein hook</fullName>
    </recommendedName>
</protein>
<dbReference type="EMBL" id="CM000361">
    <property type="protein sequence ID" value="EDX05453.1"/>
    <property type="molecule type" value="Genomic_DNA"/>
</dbReference>
<dbReference type="SMR" id="B4Q9E6"/>
<dbReference type="STRING" id="7240.B4Q9E6"/>
<dbReference type="EnsemblMetazoa" id="FBtr0221698">
    <property type="protein sequence ID" value="FBpp0220190"/>
    <property type="gene ID" value="FBgn0193208"/>
</dbReference>
<dbReference type="EnsemblMetazoa" id="XM_002079832.4">
    <property type="protein sequence ID" value="XP_002079868.1"/>
    <property type="gene ID" value="LOC6732755"/>
</dbReference>
<dbReference type="GeneID" id="6732755"/>
<dbReference type="CTD" id="35169"/>
<dbReference type="HOGENOM" id="CLU_011214_1_0_1"/>
<dbReference type="OMA" id="DAKYRKC"/>
<dbReference type="OrthoDB" id="49395at2759"/>
<dbReference type="PhylomeDB" id="B4Q9E6"/>
<dbReference type="Proteomes" id="UP000000304">
    <property type="component" value="Chromosome 2L"/>
</dbReference>
<dbReference type="Bgee" id="FBgn0193208">
    <property type="expression patterns" value="Expressed in embryo and 3 other cell types or tissues"/>
</dbReference>
<dbReference type="GO" id="GO:0005813">
    <property type="term" value="C:centrosome"/>
    <property type="evidence" value="ECO:0007669"/>
    <property type="project" value="TreeGrafter"/>
</dbReference>
<dbReference type="GO" id="GO:0005768">
    <property type="term" value="C:endosome"/>
    <property type="evidence" value="ECO:0000250"/>
    <property type="project" value="UniProtKB"/>
</dbReference>
<dbReference type="GO" id="GO:0005874">
    <property type="term" value="C:microtubule"/>
    <property type="evidence" value="ECO:0007669"/>
    <property type="project" value="UniProtKB-KW"/>
</dbReference>
<dbReference type="GO" id="GO:0045202">
    <property type="term" value="C:synapse"/>
    <property type="evidence" value="ECO:0000250"/>
    <property type="project" value="UniProtKB"/>
</dbReference>
<dbReference type="GO" id="GO:0051959">
    <property type="term" value="F:dynein light intermediate chain binding"/>
    <property type="evidence" value="ECO:0007669"/>
    <property type="project" value="TreeGrafter"/>
</dbReference>
<dbReference type="GO" id="GO:0008017">
    <property type="term" value="F:microtubule binding"/>
    <property type="evidence" value="ECO:0000250"/>
    <property type="project" value="UniProtKB"/>
</dbReference>
<dbReference type="GO" id="GO:0031267">
    <property type="term" value="F:small GTPase binding"/>
    <property type="evidence" value="ECO:0007669"/>
    <property type="project" value="EnsemblMetazoa"/>
</dbReference>
<dbReference type="GO" id="GO:0031122">
    <property type="term" value="P:cytoplasmic microtubule organization"/>
    <property type="evidence" value="ECO:0007669"/>
    <property type="project" value="InterPro"/>
</dbReference>
<dbReference type="GO" id="GO:0030705">
    <property type="term" value="P:cytoskeleton-dependent intracellular transport"/>
    <property type="evidence" value="ECO:0000250"/>
    <property type="project" value="UniProtKB"/>
</dbReference>
<dbReference type="GO" id="GO:0008340">
    <property type="term" value="P:determination of adult lifespan"/>
    <property type="evidence" value="ECO:0000250"/>
    <property type="project" value="UniProtKB"/>
</dbReference>
<dbReference type="GO" id="GO:0006897">
    <property type="term" value="P:endocytosis"/>
    <property type="evidence" value="ECO:0000250"/>
    <property type="project" value="UniProtKB"/>
</dbReference>
<dbReference type="CDD" id="cd22222">
    <property type="entry name" value="HkD_Hook"/>
    <property type="match status" value="1"/>
</dbReference>
<dbReference type="FunFam" id="1.10.418.10:FF:000024">
    <property type="entry name" value="Hook homolog 3 (Drosophila)"/>
    <property type="match status" value="1"/>
</dbReference>
<dbReference type="Gene3D" id="1.10.418.10">
    <property type="entry name" value="Calponin-like domain"/>
    <property type="match status" value="1"/>
</dbReference>
<dbReference type="InterPro" id="IPR001715">
    <property type="entry name" value="CH_dom"/>
</dbReference>
<dbReference type="InterPro" id="IPR036872">
    <property type="entry name" value="CH_dom_sf"/>
</dbReference>
<dbReference type="InterPro" id="IPR008636">
    <property type="entry name" value="Hook_C"/>
</dbReference>
<dbReference type="InterPro" id="IPR043936">
    <property type="entry name" value="HOOK_N"/>
</dbReference>
<dbReference type="PANTHER" id="PTHR18947">
    <property type="entry name" value="HOOK PROTEINS"/>
    <property type="match status" value="1"/>
</dbReference>
<dbReference type="PANTHER" id="PTHR18947:SF39">
    <property type="entry name" value="PROTEIN HOOK"/>
    <property type="match status" value="1"/>
</dbReference>
<dbReference type="Pfam" id="PF05622">
    <property type="entry name" value="HOOK"/>
    <property type="match status" value="1"/>
</dbReference>
<dbReference type="Pfam" id="PF19047">
    <property type="entry name" value="HOOK_N"/>
    <property type="match status" value="1"/>
</dbReference>
<dbReference type="SUPFAM" id="SSF116907">
    <property type="entry name" value="Hook domain"/>
    <property type="match status" value="1"/>
</dbReference>
<dbReference type="PROSITE" id="PS50021">
    <property type="entry name" value="CH"/>
    <property type="match status" value="1"/>
</dbReference>
<name>HOOK_DROSI</name>
<comment type="function">
    <text evidence="1">Involved in endocytic trafficking by stabilizing organelles of the endocytic pathway. Probably acts as a cytoskeletal linker protein required to tether endosome vesicles to the cytoskeleton. Involved in modulation of endocytosis at stages required for down-regulation of membrane proteins that control synapse size. Not involved in synaptic vesicle recycling. Required in R7 cells for boss endocytosis into multivesicular bodies (MVBs). Has a role in regulating adult longevity.</text>
</comment>
<comment type="subunit">
    <text evidence="1">Homodimer. Interacts with microtubules via its N-terminus.</text>
</comment>
<comment type="subcellular location">
    <subcellularLocation>
        <location evidence="1">Cytoplasm</location>
        <location evidence="1">Cytoskeleton</location>
    </subcellularLocation>
    <subcellularLocation>
        <location evidence="1">Endosome</location>
    </subcellularLocation>
    <subcellularLocation>
        <location evidence="1">Synapse</location>
    </subcellularLocation>
    <text evidence="1">Enriched at neuromuscular synapses, in both presynaptic and postsynaptic regions.</text>
</comment>
<comment type="domain">
    <text evidence="1">The coiled coil domain mediates homodimerization.</text>
</comment>
<comment type="similarity">
    <text evidence="4">Belongs to the hook family.</text>
</comment>
<accession>B4Q9E6</accession>
<gene>
    <name evidence="1" type="primary">hook</name>
    <name evidence="1" type="synonym">hk</name>
    <name type="ORF">GD21788</name>
</gene>
<keyword id="KW-0175">Coiled coil</keyword>
<keyword id="KW-0963">Cytoplasm</keyword>
<keyword id="KW-0206">Cytoskeleton</keyword>
<keyword id="KW-0217">Developmental protein</keyword>
<keyword id="KW-0254">Endocytosis</keyword>
<keyword id="KW-0967">Endosome</keyword>
<keyword id="KW-0493">Microtubule</keyword>
<keyword id="KW-1185">Reference proteome</keyword>
<keyword id="KW-0770">Synapse</keyword>
<reference key="1">
    <citation type="journal article" date="2007" name="Nature">
        <title>Evolution of genes and genomes on the Drosophila phylogeny.</title>
        <authorList>
            <consortium name="Drosophila 12 genomes consortium"/>
        </authorList>
    </citation>
    <scope>NUCLEOTIDE SEQUENCE [LARGE SCALE GENOMIC DNA]</scope>
</reference>
<organism>
    <name type="scientific">Drosophila simulans</name>
    <name type="common">Fruit fly</name>
    <dbReference type="NCBI Taxonomy" id="7240"/>
    <lineage>
        <taxon>Eukaryota</taxon>
        <taxon>Metazoa</taxon>
        <taxon>Ecdysozoa</taxon>
        <taxon>Arthropoda</taxon>
        <taxon>Hexapoda</taxon>
        <taxon>Insecta</taxon>
        <taxon>Pterygota</taxon>
        <taxon>Neoptera</taxon>
        <taxon>Endopterygota</taxon>
        <taxon>Diptera</taxon>
        <taxon>Brachycera</taxon>
        <taxon>Muscomorpha</taxon>
        <taxon>Ephydroidea</taxon>
        <taxon>Drosophilidae</taxon>
        <taxon>Drosophila</taxon>
        <taxon>Sophophora</taxon>
    </lineage>
</organism>